<evidence type="ECO:0000255" key="1">
    <source>
        <dbReference type="HAMAP-Rule" id="MF_01518"/>
    </source>
</evidence>
<dbReference type="EC" id="3.5.4.2" evidence="1"/>
<dbReference type="EMBL" id="CP000962">
    <property type="protein sequence ID" value="ACA55991.1"/>
    <property type="molecule type" value="Genomic_DNA"/>
</dbReference>
<dbReference type="RefSeq" id="WP_012343902.1">
    <property type="nucleotide sequence ID" value="NC_010520.1"/>
</dbReference>
<dbReference type="SMR" id="B1KTS4"/>
<dbReference type="KEGG" id="cbl:CLK_3488"/>
<dbReference type="HOGENOM" id="CLU_027935_0_0_9"/>
<dbReference type="GO" id="GO:0000034">
    <property type="term" value="F:adenine deaminase activity"/>
    <property type="evidence" value="ECO:0007669"/>
    <property type="project" value="UniProtKB-UniRule"/>
</dbReference>
<dbReference type="GO" id="GO:0006146">
    <property type="term" value="P:adenine catabolic process"/>
    <property type="evidence" value="ECO:0007669"/>
    <property type="project" value="InterPro"/>
</dbReference>
<dbReference type="CDD" id="cd01295">
    <property type="entry name" value="AdeC"/>
    <property type="match status" value="1"/>
</dbReference>
<dbReference type="FunFam" id="3.20.20.140:FF:000016">
    <property type="entry name" value="Adenine deaminase"/>
    <property type="match status" value="1"/>
</dbReference>
<dbReference type="Gene3D" id="3.20.20.140">
    <property type="entry name" value="Metal-dependent hydrolases"/>
    <property type="match status" value="1"/>
</dbReference>
<dbReference type="Gene3D" id="2.30.40.10">
    <property type="entry name" value="Urease, subunit C, domain 1"/>
    <property type="match status" value="1"/>
</dbReference>
<dbReference type="HAMAP" id="MF_01518">
    <property type="entry name" value="Adenine_deamin"/>
    <property type="match status" value="1"/>
</dbReference>
<dbReference type="InterPro" id="IPR006679">
    <property type="entry name" value="Adenine_deam"/>
</dbReference>
<dbReference type="InterPro" id="IPR026912">
    <property type="entry name" value="Adenine_deam_C"/>
</dbReference>
<dbReference type="InterPro" id="IPR006680">
    <property type="entry name" value="Amidohydro-rel"/>
</dbReference>
<dbReference type="InterPro" id="IPR011059">
    <property type="entry name" value="Metal-dep_hydrolase_composite"/>
</dbReference>
<dbReference type="InterPro" id="IPR032466">
    <property type="entry name" value="Metal_Hydrolase"/>
</dbReference>
<dbReference type="NCBIfam" id="TIGR01178">
    <property type="entry name" value="ade"/>
    <property type="match status" value="1"/>
</dbReference>
<dbReference type="PANTHER" id="PTHR11113:SF2">
    <property type="entry name" value="ADENINE DEAMINASE"/>
    <property type="match status" value="1"/>
</dbReference>
<dbReference type="PANTHER" id="PTHR11113">
    <property type="entry name" value="N-ACETYLGLUCOSAMINE-6-PHOSPHATE DEACETYLASE"/>
    <property type="match status" value="1"/>
</dbReference>
<dbReference type="Pfam" id="PF13382">
    <property type="entry name" value="Adenine_deam_C"/>
    <property type="match status" value="1"/>
</dbReference>
<dbReference type="Pfam" id="PF01979">
    <property type="entry name" value="Amidohydro_1"/>
    <property type="match status" value="1"/>
</dbReference>
<dbReference type="SUPFAM" id="SSF51338">
    <property type="entry name" value="Composite domain of metallo-dependent hydrolases"/>
    <property type="match status" value="1"/>
</dbReference>
<dbReference type="SUPFAM" id="SSF51556">
    <property type="entry name" value="Metallo-dependent hydrolases"/>
    <property type="match status" value="1"/>
</dbReference>
<name>ADEC_CLOBM</name>
<sequence>MFNKFNTKPLWEVSKTLSSVAQGFEPADMVIINSRLINVCTREVIENTDVAISCGRIALVGDAKHCIGESTEVIDAKGQYIAPGFLDGHIHVESSMLSVSEYARSVVPHGTVGIYMDPHEICNVLGLNGVRYMIEDGKGTPLKNMVTTPSCVPAVPGFEDTGAAVGPEDVRETMKWDEIVGLGEMMNFPGILYSTDHAHGVVGETLKASKTVTGHYSLPETGKGLNGYIASGVRCCHESTRAEDALAKMRLGMYTMFREGSAWHDLKEVSKAITGNKVDSRFAVLISDDTHPHTLLKDGHLDHIIKRAIEEGIEPLTAIQMVTINCAQCFQMDHELGSITPGKCADIVLIEDLKDVKITKVIIDGNLVAKDGVLTTSIAKYDYPENAMHSMHIRDKITPASFNIMAQNKEKVTARVIEIIPERVGTYERHIELNVKDDKVQCDPSKDVLKAVVFERHHETGKAGYGFVKGFGIKRGAMAATVAHDAHNLLVIGTNDEDMALAANTLIECGGGMVAVQDGKVLGLVPLPIAGLMSNKPLEEMAEMVEKLDSAWKEIGCDIVSPFMTMALIPLACLPELRLTNRGLVDCNKFEFVSLFVEE</sequence>
<comment type="catalytic activity">
    <reaction evidence="1">
        <text>adenine + H2O + H(+) = hypoxanthine + NH4(+)</text>
        <dbReference type="Rhea" id="RHEA:23688"/>
        <dbReference type="ChEBI" id="CHEBI:15377"/>
        <dbReference type="ChEBI" id="CHEBI:15378"/>
        <dbReference type="ChEBI" id="CHEBI:16708"/>
        <dbReference type="ChEBI" id="CHEBI:17368"/>
        <dbReference type="ChEBI" id="CHEBI:28938"/>
        <dbReference type="EC" id="3.5.4.2"/>
    </reaction>
</comment>
<comment type="cofactor">
    <cofactor evidence="1">
        <name>Mn(2+)</name>
        <dbReference type="ChEBI" id="CHEBI:29035"/>
    </cofactor>
</comment>
<comment type="similarity">
    <text evidence="1">Belongs to the metallo-dependent hydrolases superfamily. Adenine deaminase family.</text>
</comment>
<gene>
    <name evidence="1" type="primary">ade</name>
    <name type="ordered locus">CLK_3488</name>
</gene>
<reference key="1">
    <citation type="journal article" date="2007" name="PLoS ONE">
        <title>Analysis of the neurotoxin complex genes in Clostridium botulinum A1-A4 and B1 strains: BoNT/A3, /Ba4 and /B1 clusters are located within plasmids.</title>
        <authorList>
            <person name="Smith T.J."/>
            <person name="Hill K.K."/>
            <person name="Foley B.T."/>
            <person name="Detter J.C."/>
            <person name="Munk A.C."/>
            <person name="Bruce D.C."/>
            <person name="Doggett N.A."/>
            <person name="Smith L.A."/>
            <person name="Marks J.D."/>
            <person name="Xie G."/>
            <person name="Brettin T.S."/>
        </authorList>
    </citation>
    <scope>NUCLEOTIDE SEQUENCE [LARGE SCALE GENOMIC DNA]</scope>
    <source>
        <strain>Loch Maree / Type A3</strain>
    </source>
</reference>
<feature type="chain" id="PRO_1000146230" description="Adenine deaminase">
    <location>
        <begin position="1"/>
        <end position="599"/>
    </location>
</feature>
<keyword id="KW-0378">Hydrolase</keyword>
<keyword id="KW-0464">Manganese</keyword>
<protein>
    <recommendedName>
        <fullName evidence="1">Adenine deaminase</fullName>
        <shortName evidence="1">Adenase</shortName>
        <shortName evidence="1">Adenine aminase</shortName>
        <ecNumber evidence="1">3.5.4.2</ecNumber>
    </recommendedName>
</protein>
<proteinExistence type="inferred from homology"/>
<accession>B1KTS4</accession>
<organism>
    <name type="scientific">Clostridium botulinum (strain Loch Maree / Type A3)</name>
    <dbReference type="NCBI Taxonomy" id="498214"/>
    <lineage>
        <taxon>Bacteria</taxon>
        <taxon>Bacillati</taxon>
        <taxon>Bacillota</taxon>
        <taxon>Clostridia</taxon>
        <taxon>Eubacteriales</taxon>
        <taxon>Clostridiaceae</taxon>
        <taxon>Clostridium</taxon>
    </lineage>
</organism>